<feature type="chain" id="PRO_0000132303" description="Putative two-component response regulator ARR21">
    <location>
        <begin position="1"/>
        <end position="613"/>
    </location>
</feature>
<feature type="domain" description="Response regulatory" evidence="3">
    <location>
        <begin position="17"/>
        <end position="131"/>
    </location>
</feature>
<feature type="DNA-binding region" description="Myb-like GARP">
    <location>
        <begin position="224"/>
        <end position="274"/>
    </location>
</feature>
<feature type="region of interest" description="Disordered" evidence="4">
    <location>
        <begin position="178"/>
        <end position="223"/>
    </location>
</feature>
<feature type="short sequence motif" description="Nuclear localization signal" evidence="2">
    <location>
        <begin position="221"/>
        <end position="224"/>
    </location>
</feature>
<feature type="compositionally biased region" description="Polar residues" evidence="4">
    <location>
        <begin position="178"/>
        <end position="195"/>
    </location>
</feature>
<feature type="modified residue" description="4-aspartylphosphate" evidence="3">
    <location>
        <position position="68"/>
    </location>
</feature>
<gene>
    <name type="primary">ARR21</name>
    <name type="ordered locus">At5g07210</name>
    <name type="ORF">T28J14_150</name>
</gene>
<proteinExistence type="evidence at transcript level"/>
<name>ARR21_ARATH</name>
<protein>
    <recommendedName>
        <fullName>Putative two-component response regulator ARR21</fullName>
    </recommendedName>
</protein>
<accession>Q9LYP5</accession>
<accession>F4K6L2</accession>
<organism>
    <name type="scientific">Arabidopsis thaliana</name>
    <name type="common">Mouse-ear cress</name>
    <dbReference type="NCBI Taxonomy" id="3702"/>
    <lineage>
        <taxon>Eukaryota</taxon>
        <taxon>Viridiplantae</taxon>
        <taxon>Streptophyta</taxon>
        <taxon>Embryophyta</taxon>
        <taxon>Tracheophyta</taxon>
        <taxon>Spermatophyta</taxon>
        <taxon>Magnoliopsida</taxon>
        <taxon>eudicotyledons</taxon>
        <taxon>Gunneridae</taxon>
        <taxon>Pentapetalae</taxon>
        <taxon>rosids</taxon>
        <taxon>malvids</taxon>
        <taxon>Brassicales</taxon>
        <taxon>Brassicaceae</taxon>
        <taxon>Camelineae</taxon>
        <taxon>Arabidopsis</taxon>
    </lineage>
</organism>
<comment type="function">
    <text evidence="1">Putative transcriptional activator that binds specifically to the DNA sequence 5'-[AG]GATT-3'. Functions as a response regulator involved in His-to-Asp phosphorelay signal transduction system. Phosphorylation of the Asp residue in the receiver domain activates the ability of the protein to promote the transcription of target genes. Could directly activate some type-A response regulators in response to cytokinins (By similarity).</text>
</comment>
<comment type="subunit">
    <text evidence="1">Binds the target DNA as a monomer.</text>
</comment>
<comment type="subcellular location">
    <subcellularLocation>
        <location>Nucleus</location>
    </subcellularLocation>
</comment>
<comment type="tissue specificity">
    <text evidence="5 6">Mainly expressed in siliques. Also found in germinating seedlings, stems, flowers and roots, but not in rosette leaves.</text>
</comment>
<comment type="PTM">
    <text>Two-component system major event consists of a His-to-Asp phosphorelay between a sensor histidine kinase (HK) and a response regulator (RR). In plants, the His-to-Asp phosphorelay involves an additional intermediate named Histidine-containing phosphotransfer protein (HPt). This multistep phosphorelay consists of a His-Asp-His-Asp sequential transfer of a phosphate group between first a His and an Asp of the HK protein, followed by the transfer to a conserved His of the HPt protein and finally the transfer to an Asp in the receiver domain of the RR protein.</text>
</comment>
<comment type="disruption phenotype">
    <text evidence="6">No visible phenotype.</text>
</comment>
<comment type="similarity">
    <text evidence="7">Belongs to the ARR family. Type-B subfamily.</text>
</comment>
<comment type="sequence caution" evidence="7">
    <conflict type="erroneous gene model prediction">
        <sequence resource="EMBL-CDS" id="AED91122"/>
    </conflict>
</comment>
<comment type="sequence caution" evidence="7">
    <conflict type="erroneous gene model prediction">
        <sequence resource="EMBL-CDS" id="CAB87277"/>
    </conflict>
</comment>
<keyword id="KW-0010">Activator</keyword>
<keyword id="KW-0932">Cytokinin signaling pathway</keyword>
<keyword id="KW-0238">DNA-binding</keyword>
<keyword id="KW-0539">Nucleus</keyword>
<keyword id="KW-0597">Phosphoprotein</keyword>
<keyword id="KW-1185">Reference proteome</keyword>
<keyword id="KW-0804">Transcription</keyword>
<keyword id="KW-0805">Transcription regulation</keyword>
<keyword id="KW-0902">Two-component regulatory system</keyword>
<sequence>MASAQSFYNQSSVLKINVMVVDDDHVFLDIMSRMLQHSKYRVIAVDDPKKALSTLKIQRDNIDLIITDYYMPGMNGLQLKKQITQEFGNLPVLVMSSDTNKEEESLSCGAMGFIPKPIHPTDLTKIYQFALSNKRNGKSTLSTEQNHKDADVSVPQQITLVPEQADVLKTKRKNCSFKSDSRTVNSTNGSCVSTDGSRKNRKRKPNGGPSDDGESMSQPAKKKKIQWTDSLHDLFLQAIRHIGLDKAVPKKILAFMSVPYLTRENVASHLQKYRIFLRRVAEQGLYSMLSDRGIDSMFRQTHIKEPYFNYYTPSTSWYDTRLNNRSFYSKPVHGFGQSKLLSTTREPVCFNQMPYNYMNRSSTYEPHRIGSGSNLTLPIQSNLSFPNQPSQNEERRSFFEPPVMANKIAQTSQVLGFGQLGPSAISGHNFNNNMTSRYGSLIPSQPGPSHFSYGMQSFLNNENVTYNPQPPANATTQPNLDELPQLENLNLYNDFGNTSELPYNISNFQFDDNKHQQGEADPTKFELPAAKFSTELNHEDDGDWTFVNINQGQSNGETSNTIASPETNTPILNINHNQNQGQDVPEFNDWSFLDPQELVDDDFMNSLFNNDMN</sequence>
<dbReference type="EMBL" id="AL163652">
    <property type="protein sequence ID" value="CAB87277.1"/>
    <property type="status" value="ALT_SEQ"/>
    <property type="molecule type" value="Genomic_DNA"/>
</dbReference>
<dbReference type="EMBL" id="CP002688">
    <property type="protein sequence ID" value="AED91122.1"/>
    <property type="status" value="ALT_SEQ"/>
    <property type="molecule type" value="Genomic_DNA"/>
</dbReference>
<dbReference type="EMBL" id="CP002688">
    <property type="protein sequence ID" value="ANM69560.1"/>
    <property type="molecule type" value="Genomic_DNA"/>
</dbReference>
<dbReference type="PIR" id="T48492">
    <property type="entry name" value="T48492"/>
</dbReference>
<dbReference type="RefSeq" id="NP_001331229.1">
    <property type="nucleotide sequence ID" value="NM_001342931.1"/>
</dbReference>
<dbReference type="RefSeq" id="NP_196338.1">
    <property type="nucleotide sequence ID" value="NM_120803.1"/>
</dbReference>
<dbReference type="SMR" id="Q9LYP5"/>
<dbReference type="BioGRID" id="15891">
    <property type="interactions" value="1"/>
</dbReference>
<dbReference type="FunCoup" id="Q9LYP5">
    <property type="interactions" value="290"/>
</dbReference>
<dbReference type="STRING" id="3702.Q9LYP5"/>
<dbReference type="PaxDb" id="3702-AT5G07210.1"/>
<dbReference type="EnsemblPlants" id="AT5G07210.2">
    <property type="protein sequence ID" value="AT5G07210.2"/>
    <property type="gene ID" value="AT5G07210"/>
</dbReference>
<dbReference type="GeneID" id="830612"/>
<dbReference type="Gramene" id="AT5G07210.2">
    <property type="protein sequence ID" value="AT5G07210.2"/>
    <property type="gene ID" value="AT5G07210"/>
</dbReference>
<dbReference type="KEGG" id="ath:AT5G07210"/>
<dbReference type="Araport" id="AT5G07210"/>
<dbReference type="TAIR" id="AT5G07210">
    <property type="gene designation" value="RR21"/>
</dbReference>
<dbReference type="eggNOG" id="KOG1601">
    <property type="taxonomic scope" value="Eukaryota"/>
</dbReference>
<dbReference type="HOGENOM" id="CLU_387641_0_0_1"/>
<dbReference type="InParanoid" id="Q9LYP5"/>
<dbReference type="OMA" id="DTNKEHE"/>
<dbReference type="PRO" id="PR:Q9LYP5"/>
<dbReference type="Proteomes" id="UP000006548">
    <property type="component" value="Chromosome 5"/>
</dbReference>
<dbReference type="ExpressionAtlas" id="Q9LYP5">
    <property type="expression patterns" value="baseline and differential"/>
</dbReference>
<dbReference type="GO" id="GO:0005634">
    <property type="term" value="C:nucleus"/>
    <property type="evidence" value="ECO:0007669"/>
    <property type="project" value="UniProtKB-SubCell"/>
</dbReference>
<dbReference type="GO" id="GO:0003677">
    <property type="term" value="F:DNA binding"/>
    <property type="evidence" value="ECO:0007669"/>
    <property type="project" value="UniProtKB-KW"/>
</dbReference>
<dbReference type="GO" id="GO:0003700">
    <property type="term" value="F:DNA-binding transcription factor activity"/>
    <property type="evidence" value="ECO:0007669"/>
    <property type="project" value="InterPro"/>
</dbReference>
<dbReference type="GO" id="GO:0009736">
    <property type="term" value="P:cytokinin-activated signaling pathway"/>
    <property type="evidence" value="ECO:0007669"/>
    <property type="project" value="UniProtKB-KW"/>
</dbReference>
<dbReference type="GO" id="GO:0000160">
    <property type="term" value="P:phosphorelay signal transduction system"/>
    <property type="evidence" value="ECO:0007669"/>
    <property type="project" value="UniProtKB-KW"/>
</dbReference>
<dbReference type="FunFam" id="1.10.10.60:FF:000007">
    <property type="entry name" value="Two-component response regulator"/>
    <property type="match status" value="1"/>
</dbReference>
<dbReference type="Gene3D" id="3.40.50.2300">
    <property type="match status" value="1"/>
</dbReference>
<dbReference type="Gene3D" id="1.10.10.60">
    <property type="entry name" value="Homeodomain-like"/>
    <property type="match status" value="1"/>
</dbReference>
<dbReference type="InterPro" id="IPR045279">
    <property type="entry name" value="ARR-like"/>
</dbReference>
<dbReference type="InterPro" id="IPR011006">
    <property type="entry name" value="CheY-like_superfamily"/>
</dbReference>
<dbReference type="InterPro" id="IPR009057">
    <property type="entry name" value="Homeodomain-like_sf"/>
</dbReference>
<dbReference type="InterPro" id="IPR017930">
    <property type="entry name" value="Myb_dom"/>
</dbReference>
<dbReference type="InterPro" id="IPR006447">
    <property type="entry name" value="Myb_dom_plants"/>
</dbReference>
<dbReference type="InterPro" id="IPR017053">
    <property type="entry name" value="Response_reg_B-typ_pln"/>
</dbReference>
<dbReference type="InterPro" id="IPR001789">
    <property type="entry name" value="Sig_transdc_resp-reg_receiver"/>
</dbReference>
<dbReference type="NCBIfam" id="TIGR01557">
    <property type="entry name" value="myb_SHAQKYF"/>
    <property type="match status" value="1"/>
</dbReference>
<dbReference type="PANTHER" id="PTHR43874:SF19">
    <property type="entry name" value="RESPONSE REGULATOR 23-RELATED"/>
    <property type="match status" value="1"/>
</dbReference>
<dbReference type="PANTHER" id="PTHR43874">
    <property type="entry name" value="TWO-COMPONENT RESPONSE REGULATOR"/>
    <property type="match status" value="1"/>
</dbReference>
<dbReference type="Pfam" id="PF00072">
    <property type="entry name" value="Response_reg"/>
    <property type="match status" value="1"/>
</dbReference>
<dbReference type="PIRSF" id="PIRSF036392">
    <property type="entry name" value="RR_ARR_type-B"/>
    <property type="match status" value="1"/>
</dbReference>
<dbReference type="SMART" id="SM00448">
    <property type="entry name" value="REC"/>
    <property type="match status" value="1"/>
</dbReference>
<dbReference type="SUPFAM" id="SSF52172">
    <property type="entry name" value="CheY-like"/>
    <property type="match status" value="1"/>
</dbReference>
<dbReference type="SUPFAM" id="SSF46689">
    <property type="entry name" value="Homeodomain-like"/>
    <property type="match status" value="1"/>
</dbReference>
<dbReference type="PROSITE" id="PS50110">
    <property type="entry name" value="RESPONSE_REGULATORY"/>
    <property type="match status" value="1"/>
</dbReference>
<evidence type="ECO:0000250" key="1"/>
<evidence type="ECO:0000255" key="2"/>
<evidence type="ECO:0000255" key="3">
    <source>
        <dbReference type="PROSITE-ProRule" id="PRU00169"/>
    </source>
</evidence>
<evidence type="ECO:0000256" key="4">
    <source>
        <dbReference type="SAM" id="MobiDB-lite"/>
    </source>
</evidence>
<evidence type="ECO:0000269" key="5">
    <source>
    </source>
</evidence>
<evidence type="ECO:0000269" key="6">
    <source ref="3"/>
</evidence>
<evidence type="ECO:0000305" key="7"/>
<reference key="1">
    <citation type="journal article" date="2000" name="Nature">
        <title>Sequence and analysis of chromosome 5 of the plant Arabidopsis thaliana.</title>
        <authorList>
            <person name="Tabata S."/>
            <person name="Kaneko T."/>
            <person name="Nakamura Y."/>
            <person name="Kotani H."/>
            <person name="Kato T."/>
            <person name="Asamizu E."/>
            <person name="Miyajima N."/>
            <person name="Sasamoto S."/>
            <person name="Kimura T."/>
            <person name="Hosouchi T."/>
            <person name="Kawashima K."/>
            <person name="Kohara M."/>
            <person name="Matsumoto M."/>
            <person name="Matsuno A."/>
            <person name="Muraki A."/>
            <person name="Nakayama S."/>
            <person name="Nakazaki N."/>
            <person name="Naruo K."/>
            <person name="Okumura S."/>
            <person name="Shinpo S."/>
            <person name="Takeuchi C."/>
            <person name="Wada T."/>
            <person name="Watanabe A."/>
            <person name="Yamada M."/>
            <person name="Yasuda M."/>
            <person name="Sato S."/>
            <person name="de la Bastide M."/>
            <person name="Huang E."/>
            <person name="Spiegel L."/>
            <person name="Gnoj L."/>
            <person name="O'Shaughnessy A."/>
            <person name="Preston R."/>
            <person name="Habermann K."/>
            <person name="Murray J."/>
            <person name="Johnson D."/>
            <person name="Rohlfing T."/>
            <person name="Nelson J."/>
            <person name="Stoneking T."/>
            <person name="Pepin K."/>
            <person name="Spieth J."/>
            <person name="Sekhon M."/>
            <person name="Armstrong J."/>
            <person name="Becker M."/>
            <person name="Belter E."/>
            <person name="Cordum H."/>
            <person name="Cordes M."/>
            <person name="Courtney L."/>
            <person name="Courtney W."/>
            <person name="Dante M."/>
            <person name="Du H."/>
            <person name="Edwards J."/>
            <person name="Fryman J."/>
            <person name="Haakensen B."/>
            <person name="Lamar E."/>
            <person name="Latreille P."/>
            <person name="Leonard S."/>
            <person name="Meyer R."/>
            <person name="Mulvaney E."/>
            <person name="Ozersky P."/>
            <person name="Riley A."/>
            <person name="Strowmatt C."/>
            <person name="Wagner-McPherson C."/>
            <person name="Wollam A."/>
            <person name="Yoakum M."/>
            <person name="Bell M."/>
            <person name="Dedhia N."/>
            <person name="Parnell L."/>
            <person name="Shah R."/>
            <person name="Rodriguez M."/>
            <person name="Hoon See L."/>
            <person name="Vil D."/>
            <person name="Baker J."/>
            <person name="Kirchoff K."/>
            <person name="Toth K."/>
            <person name="King L."/>
            <person name="Bahret A."/>
            <person name="Miller B."/>
            <person name="Marra M.A."/>
            <person name="Martienssen R."/>
            <person name="McCombie W.R."/>
            <person name="Wilson R.K."/>
            <person name="Murphy G."/>
            <person name="Bancroft I."/>
            <person name="Volckaert G."/>
            <person name="Wambutt R."/>
            <person name="Duesterhoeft A."/>
            <person name="Stiekema W."/>
            <person name="Pohl T."/>
            <person name="Entian K.-D."/>
            <person name="Terryn N."/>
            <person name="Hartley N."/>
            <person name="Bent E."/>
            <person name="Johnson S."/>
            <person name="Langham S.-A."/>
            <person name="McCullagh B."/>
            <person name="Robben J."/>
            <person name="Grymonprez B."/>
            <person name="Zimmermann W."/>
            <person name="Ramsperger U."/>
            <person name="Wedler H."/>
            <person name="Balke K."/>
            <person name="Wedler E."/>
            <person name="Peters S."/>
            <person name="van Staveren M."/>
            <person name="Dirkse W."/>
            <person name="Mooijman P."/>
            <person name="Klein Lankhorst R."/>
            <person name="Weitzenegger T."/>
            <person name="Bothe G."/>
            <person name="Rose M."/>
            <person name="Hauf J."/>
            <person name="Berneiser S."/>
            <person name="Hempel S."/>
            <person name="Feldpausch M."/>
            <person name="Lamberth S."/>
            <person name="Villarroel R."/>
            <person name="Gielen J."/>
            <person name="Ardiles W."/>
            <person name="Bents O."/>
            <person name="Lemcke K."/>
            <person name="Kolesov G."/>
            <person name="Mayer K.F.X."/>
            <person name="Rudd S."/>
            <person name="Schoof H."/>
            <person name="Schueller C."/>
            <person name="Zaccaria P."/>
            <person name="Mewes H.-W."/>
            <person name="Bevan M."/>
            <person name="Fransz P.F."/>
        </authorList>
    </citation>
    <scope>NUCLEOTIDE SEQUENCE [LARGE SCALE GENOMIC DNA]</scope>
    <source>
        <strain>cv. Columbia</strain>
    </source>
</reference>
<reference key="2">
    <citation type="journal article" date="2017" name="Plant J.">
        <title>Araport11: a complete reannotation of the Arabidopsis thaliana reference genome.</title>
        <authorList>
            <person name="Cheng C.Y."/>
            <person name="Krishnakumar V."/>
            <person name="Chan A.P."/>
            <person name="Thibaud-Nissen F."/>
            <person name="Schobel S."/>
            <person name="Town C.D."/>
        </authorList>
    </citation>
    <scope>GENOME REANNOTATION</scope>
    <source>
        <strain>cv. Columbia</strain>
    </source>
</reference>
<reference key="3">
    <citation type="journal article" date="2003" name="Plant Biol.">
        <title>Molecular and physiological characterisation of an insertion mutant in the ARR21 putative response regulator gene from Arabidopsis thaliana.</title>
        <authorList>
            <person name="Horak J."/>
            <person name="Brzobohaty B."/>
            <person name="Lexa M."/>
        </authorList>
    </citation>
    <scope>TISSUE SPECIFICITY</scope>
    <scope>DISRUPTION PHENOTYPE</scope>
</reference>
<reference key="4">
    <citation type="journal article" date="2004" name="Plant Physiol.">
        <title>Type-B response regulators display overlapping expression patterns in Arabidopsis.</title>
        <authorList>
            <person name="Mason M.G."/>
            <person name="Li J."/>
            <person name="Mathews D.E."/>
            <person name="Kieber J.J."/>
            <person name="Schaller G.E."/>
        </authorList>
    </citation>
    <scope>TISSUE SPECIFICITY</scope>
</reference>